<proteinExistence type="inferred from homology"/>
<accession>Q5PG75</accession>
<protein>
    <recommendedName>
        <fullName evidence="1">2,3-bisphosphoglycerate-dependent phosphoglycerate mutase</fullName>
        <shortName evidence="1">BPG-dependent PGAM</shortName>
        <shortName evidence="1">PGAM</shortName>
        <shortName evidence="1">Phosphoglyceromutase</shortName>
        <shortName evidence="1">dPGM</shortName>
        <ecNumber evidence="1">5.4.2.11</ecNumber>
    </recommendedName>
</protein>
<evidence type="ECO:0000255" key="1">
    <source>
        <dbReference type="HAMAP-Rule" id="MF_01039"/>
    </source>
</evidence>
<reference key="1">
    <citation type="journal article" date="2004" name="Nat. Genet.">
        <title>Comparison of genome degradation in Paratyphi A and Typhi, human-restricted serovars of Salmonella enterica that cause typhoid.</title>
        <authorList>
            <person name="McClelland M."/>
            <person name="Sanderson K.E."/>
            <person name="Clifton S.W."/>
            <person name="Latreille P."/>
            <person name="Porwollik S."/>
            <person name="Sabo A."/>
            <person name="Meyer R."/>
            <person name="Bieri T."/>
            <person name="Ozersky P."/>
            <person name="McLellan M."/>
            <person name="Harkins C.R."/>
            <person name="Wang C."/>
            <person name="Nguyen C."/>
            <person name="Berghoff A."/>
            <person name="Elliott G."/>
            <person name="Kohlberg S."/>
            <person name="Strong C."/>
            <person name="Du F."/>
            <person name="Carter J."/>
            <person name="Kremizki C."/>
            <person name="Layman D."/>
            <person name="Leonard S."/>
            <person name="Sun H."/>
            <person name="Fulton L."/>
            <person name="Nash W."/>
            <person name="Miner T."/>
            <person name="Minx P."/>
            <person name="Delehaunty K."/>
            <person name="Fronick C."/>
            <person name="Magrini V."/>
            <person name="Nhan M."/>
            <person name="Warren W."/>
            <person name="Florea L."/>
            <person name="Spieth J."/>
            <person name="Wilson R.K."/>
        </authorList>
    </citation>
    <scope>NUCLEOTIDE SEQUENCE [LARGE SCALE GENOMIC DNA]</scope>
    <source>
        <strain>ATCC 9150 / SARB42</strain>
    </source>
</reference>
<sequence length="250" mass="28480">MAVTKLVLVRHGESQWNKENRFTGWYDVDLSEKGVSEAKAAGKLLKEEGFSFDFAYTSVLKRAIHTLWNVLDELDQAWLPVEKSWKLNERHYGALQGLNKAETAEKYGDEQVKQWRRGFAVTPPELTKDDERYPGHDPRYAKLSEKELPLTESLALTIDRVIPYWTDTILPRMKSGERVIIAAHGNSLRALVKYLDNMSEDEILELNIPTGVPLVYEFDENFKPLKHYYLGNADEIAAKAAAVANQGKAK</sequence>
<name>GPMA_SALPA</name>
<dbReference type="EC" id="5.4.2.11" evidence="1"/>
<dbReference type="EMBL" id="CP000026">
    <property type="protein sequence ID" value="AAV77888.1"/>
    <property type="molecule type" value="Genomic_DNA"/>
</dbReference>
<dbReference type="RefSeq" id="WP_000301559.1">
    <property type="nucleotide sequence ID" value="NC_006511.1"/>
</dbReference>
<dbReference type="SMR" id="Q5PG75"/>
<dbReference type="KEGG" id="spt:SPA1980"/>
<dbReference type="HOGENOM" id="CLU_033323_1_1_6"/>
<dbReference type="UniPathway" id="UPA00109">
    <property type="reaction ID" value="UER00186"/>
</dbReference>
<dbReference type="Proteomes" id="UP000008185">
    <property type="component" value="Chromosome"/>
</dbReference>
<dbReference type="GO" id="GO:0004619">
    <property type="term" value="F:phosphoglycerate mutase activity"/>
    <property type="evidence" value="ECO:0007669"/>
    <property type="project" value="UniProtKB-EC"/>
</dbReference>
<dbReference type="GO" id="GO:0006094">
    <property type="term" value="P:gluconeogenesis"/>
    <property type="evidence" value="ECO:0007669"/>
    <property type="project" value="UniProtKB-UniRule"/>
</dbReference>
<dbReference type="GO" id="GO:0006096">
    <property type="term" value="P:glycolytic process"/>
    <property type="evidence" value="ECO:0007669"/>
    <property type="project" value="UniProtKB-UniRule"/>
</dbReference>
<dbReference type="CDD" id="cd07067">
    <property type="entry name" value="HP_PGM_like"/>
    <property type="match status" value="1"/>
</dbReference>
<dbReference type="FunFam" id="3.40.50.1240:FF:000003">
    <property type="entry name" value="2,3-bisphosphoglycerate-dependent phosphoglycerate mutase"/>
    <property type="match status" value="1"/>
</dbReference>
<dbReference type="Gene3D" id="3.40.50.1240">
    <property type="entry name" value="Phosphoglycerate mutase-like"/>
    <property type="match status" value="1"/>
</dbReference>
<dbReference type="HAMAP" id="MF_01039">
    <property type="entry name" value="PGAM_GpmA"/>
    <property type="match status" value="1"/>
</dbReference>
<dbReference type="InterPro" id="IPR013078">
    <property type="entry name" value="His_Pase_superF_clade-1"/>
</dbReference>
<dbReference type="InterPro" id="IPR029033">
    <property type="entry name" value="His_PPase_superfam"/>
</dbReference>
<dbReference type="InterPro" id="IPR001345">
    <property type="entry name" value="PG/BPGM_mutase_AS"/>
</dbReference>
<dbReference type="InterPro" id="IPR005952">
    <property type="entry name" value="Phosphogly_mut1"/>
</dbReference>
<dbReference type="NCBIfam" id="TIGR01258">
    <property type="entry name" value="pgm_1"/>
    <property type="match status" value="1"/>
</dbReference>
<dbReference type="NCBIfam" id="NF010713">
    <property type="entry name" value="PRK14115.1"/>
    <property type="match status" value="1"/>
</dbReference>
<dbReference type="PANTHER" id="PTHR11931">
    <property type="entry name" value="PHOSPHOGLYCERATE MUTASE"/>
    <property type="match status" value="1"/>
</dbReference>
<dbReference type="Pfam" id="PF00300">
    <property type="entry name" value="His_Phos_1"/>
    <property type="match status" value="1"/>
</dbReference>
<dbReference type="PIRSF" id="PIRSF000709">
    <property type="entry name" value="6PFK_2-Ptase"/>
    <property type="match status" value="1"/>
</dbReference>
<dbReference type="SMART" id="SM00855">
    <property type="entry name" value="PGAM"/>
    <property type="match status" value="1"/>
</dbReference>
<dbReference type="SUPFAM" id="SSF53254">
    <property type="entry name" value="Phosphoglycerate mutase-like"/>
    <property type="match status" value="1"/>
</dbReference>
<dbReference type="PROSITE" id="PS00175">
    <property type="entry name" value="PG_MUTASE"/>
    <property type="match status" value="1"/>
</dbReference>
<organism>
    <name type="scientific">Salmonella paratyphi A (strain ATCC 9150 / SARB42)</name>
    <dbReference type="NCBI Taxonomy" id="295319"/>
    <lineage>
        <taxon>Bacteria</taxon>
        <taxon>Pseudomonadati</taxon>
        <taxon>Pseudomonadota</taxon>
        <taxon>Gammaproteobacteria</taxon>
        <taxon>Enterobacterales</taxon>
        <taxon>Enterobacteriaceae</taxon>
        <taxon>Salmonella</taxon>
    </lineage>
</organism>
<feature type="chain" id="PRO_0000229139" description="2,3-bisphosphoglycerate-dependent phosphoglycerate mutase">
    <location>
        <begin position="1"/>
        <end position="250"/>
    </location>
</feature>
<feature type="active site" description="Tele-phosphohistidine intermediate" evidence="1">
    <location>
        <position position="11"/>
    </location>
</feature>
<feature type="active site" description="Proton donor/acceptor" evidence="1">
    <location>
        <position position="89"/>
    </location>
</feature>
<feature type="binding site" evidence="1">
    <location>
        <begin position="10"/>
        <end position="17"/>
    </location>
    <ligand>
        <name>substrate</name>
    </ligand>
</feature>
<feature type="binding site" evidence="1">
    <location>
        <begin position="23"/>
        <end position="24"/>
    </location>
    <ligand>
        <name>substrate</name>
    </ligand>
</feature>
<feature type="binding site" evidence="1">
    <location>
        <position position="62"/>
    </location>
    <ligand>
        <name>substrate</name>
    </ligand>
</feature>
<feature type="binding site" evidence="1">
    <location>
        <begin position="89"/>
        <end position="92"/>
    </location>
    <ligand>
        <name>substrate</name>
    </ligand>
</feature>
<feature type="binding site" evidence="1">
    <location>
        <position position="100"/>
    </location>
    <ligand>
        <name>substrate</name>
    </ligand>
</feature>
<feature type="binding site" evidence="1">
    <location>
        <begin position="116"/>
        <end position="117"/>
    </location>
    <ligand>
        <name>substrate</name>
    </ligand>
</feature>
<feature type="binding site" evidence="1">
    <location>
        <begin position="185"/>
        <end position="186"/>
    </location>
    <ligand>
        <name>substrate</name>
    </ligand>
</feature>
<feature type="site" description="Transition state stabilizer" evidence="1">
    <location>
        <position position="184"/>
    </location>
</feature>
<comment type="function">
    <text evidence="1">Catalyzes the interconversion of 2-phosphoglycerate and 3-phosphoglycerate.</text>
</comment>
<comment type="catalytic activity">
    <reaction evidence="1">
        <text>(2R)-2-phosphoglycerate = (2R)-3-phosphoglycerate</text>
        <dbReference type="Rhea" id="RHEA:15901"/>
        <dbReference type="ChEBI" id="CHEBI:58272"/>
        <dbReference type="ChEBI" id="CHEBI:58289"/>
        <dbReference type="EC" id="5.4.2.11"/>
    </reaction>
</comment>
<comment type="pathway">
    <text evidence="1">Carbohydrate degradation; glycolysis; pyruvate from D-glyceraldehyde 3-phosphate: step 3/5.</text>
</comment>
<comment type="subunit">
    <text evidence="1">Homodimer.</text>
</comment>
<comment type="similarity">
    <text evidence="1">Belongs to the phosphoglycerate mutase family. BPG-dependent PGAM subfamily.</text>
</comment>
<gene>
    <name evidence="1" type="primary">gpmA</name>
    <name type="ordered locus">SPA1980</name>
</gene>
<keyword id="KW-0312">Gluconeogenesis</keyword>
<keyword id="KW-0324">Glycolysis</keyword>
<keyword id="KW-0413">Isomerase</keyword>